<organismHost>
    <name type="scientific">Aves</name>
    <dbReference type="NCBI Taxonomy" id="8782"/>
</organismHost>
<organismHost>
    <name type="scientific">Cetacea</name>
    <name type="common">whales</name>
    <dbReference type="NCBI Taxonomy" id="9721"/>
</organismHost>
<organismHost>
    <name type="scientific">Homo sapiens</name>
    <name type="common">Human</name>
    <dbReference type="NCBI Taxonomy" id="9606"/>
</organismHost>
<organismHost>
    <name type="scientific">Phocidae</name>
    <name type="common">true seals</name>
    <dbReference type="NCBI Taxonomy" id="9709"/>
</organismHost>
<organismHost>
    <name type="scientific">Sus scrofa</name>
    <name type="common">Pig</name>
    <dbReference type="NCBI Taxonomy" id="9823"/>
</organismHost>
<organism>
    <name type="scientific">Influenza A virus (strain A/Memphis/2/1978 H3N2)</name>
    <dbReference type="NCBI Taxonomy" id="383580"/>
    <lineage>
        <taxon>Viruses</taxon>
        <taxon>Riboviria</taxon>
        <taxon>Orthornavirae</taxon>
        <taxon>Negarnaviricota</taxon>
        <taxon>Polyploviricotina</taxon>
        <taxon>Insthoviricetes</taxon>
        <taxon>Articulavirales</taxon>
        <taxon>Orthomyxoviridae</taxon>
        <taxon>Alphainfluenzavirus</taxon>
        <taxon>Alphainfluenzavirus influenzae</taxon>
        <taxon>Influenza A virus</taxon>
    </lineage>
</organism>
<keyword id="KW-1157">Cap snatching</keyword>
<keyword id="KW-1262">Eukaryotic host gene expression shutoff by virus</keyword>
<keyword id="KW-1191">Eukaryotic host transcription shutoff by virus</keyword>
<keyword id="KW-1190">Host gene expression shutoff by virus</keyword>
<keyword id="KW-1045">Host mitochondrion</keyword>
<keyword id="KW-1048">Host nucleus</keyword>
<keyword id="KW-0945">Host-virus interaction</keyword>
<keyword id="KW-1090">Inhibition of host innate immune response by virus</keyword>
<keyword id="KW-1097">Inhibition of host MAVS by virus</keyword>
<keyword id="KW-1113">Inhibition of host RLR pathway by virus</keyword>
<keyword id="KW-1104">Inhibition of host RNA polymerase II by virus</keyword>
<keyword id="KW-0506">mRNA capping</keyword>
<keyword id="KW-0507">mRNA processing</keyword>
<keyword id="KW-0899">Viral immunoevasion</keyword>
<keyword id="KW-1195">Viral transcription</keyword>
<keyword id="KW-0946">Virion</keyword>
<feature type="chain" id="PRO_0000279639" description="Polymerase basic protein 2">
    <location>
        <begin position="1"/>
        <end position="759"/>
    </location>
</feature>
<feature type="short sequence motif" description="Nuclear localization signal" evidence="1">
    <location>
        <begin position="736"/>
        <end position="739"/>
    </location>
</feature>
<feature type="site" description="Mammalian adaptation" evidence="1">
    <location>
        <position position="627"/>
    </location>
</feature>
<proteinExistence type="inferred from homology"/>
<evidence type="ECO:0000255" key="1">
    <source>
        <dbReference type="HAMAP-Rule" id="MF_04062"/>
    </source>
</evidence>
<name>PB2_I78A7</name>
<comment type="function">
    <text evidence="1">Plays an essential role in transcription initiation and cap-stealing mechanism, in which cellular capped pre-mRNAs are used to generate primers for viral transcription. Recognizes and binds the 7-methylguanosine-containing cap of the target pre-RNA which is subsequently cleaved after 10-13 nucleotides by the viral protein PA. Plays a role in the initiation of the viral genome replication and modulates the activity of the ribonucleoprotein (RNP) complex. In addition, participates in the inhibition of type I interferon induction through interaction with and inhibition of the host mitochondrial antiviral signaling protein MAVS.</text>
</comment>
<comment type="subunit">
    <text evidence="1">Influenza RNA polymerase is composed of three subunits: PB1, PB2 and PA. Interacts (via N-terminus) with PB1 (via C-terminus). Interacts with nucleoprotein NP (via N-terminus). Interacts (via N-terminus) with host MAVS (via N-terminus); this interaction inhibits host innate immune response.</text>
</comment>
<comment type="subcellular location">
    <subcellularLocation>
        <location evidence="1">Virion</location>
    </subcellularLocation>
    <subcellularLocation>
        <location evidence="1">Host nucleus</location>
    </subcellularLocation>
    <subcellularLocation>
        <location evidence="1">Host mitochondrion</location>
    </subcellularLocation>
</comment>
<comment type="similarity">
    <text evidence="1">Belongs to the influenza viruses PB2 family.</text>
</comment>
<sequence length="759" mass="86089">MERIKELRNLMSQSRTREILTKTTVDHMAIIKKYTSGRQEKNPSLRMKWMMAMKYPITADKRITEMVPERNEQGQTLWSKMSDAGSDRVMVSPLAVTWWNRNGPVTSTVHYPKVYKTYFDKVERLKHGTFGPVHFRNQVKIRRRVDINPGHADLSAKEAQDVIMEVVFPNEVGARILTSESQLTITKEKKEELQNCKISPLMVAYMLERELVRKTRFLPVAGGTSSMYIEVLHLTQGTCWEQMYTPGGEVRNDDVDQSLIIAARNIVRRAAVSADPLASLLEMCHSTQIGGTRMVDILRQNPTEEQAVDICKAAMGLRISSSFSFGGFTFKRTSGSSIKREEEVLTGNLQTLKIKVHEGYEEFTMVGKRATAILRKATRRLVQLIVSGRDEQSIAEAIIVAIVFSQEDCMIKAVRGDLNFVNRANQRLNPMHQLLRHFQKDAKVLFQNWGIEHIDNVMGMVGVLPDMTPSTEMSMRGIRVSKMGVDEYSSTERVVVSIDRFLRVRDQRGNVLLSPEEVSETQGTERLTITYSSSMMWEINGPESVLVNTYQWIIRNWETVKIQWSQNPTMLYNKMEFEPFQSLVPKAIRGQYSGFVRTLFQQMRDVLGTFDTTQMIKLLPFAAAPPKQSRMQFSSLTVNVRGSGMRILVRGNSPVFNYNKTTKRLTILGKDAGTLIEDPDESTSGVESAVLRGFLILGKEDRRYGPALSINELSNLAKGEKANVLIGQGDVVLVMKRKRDSSILTDSQTATKRIRMAIN</sequence>
<protein>
    <recommendedName>
        <fullName evidence="1">Polymerase basic protein 2</fullName>
    </recommendedName>
    <alternativeName>
        <fullName evidence="1">RNA-directed RNA polymerase subunit P3</fullName>
    </alternativeName>
</protein>
<accession>Q2VNE3</accession>
<gene>
    <name evidence="1" type="primary">PB2</name>
</gene>
<dbReference type="EMBL" id="CY006698">
    <property type="protein sequence ID" value="ABB96329.1"/>
    <property type="molecule type" value="Genomic_RNA"/>
</dbReference>
<dbReference type="SMR" id="Q2VNE3"/>
<dbReference type="PRO" id="PR:Q2VNE3"/>
<dbReference type="Proteomes" id="UP000007555">
    <property type="component" value="Genome"/>
</dbReference>
<dbReference type="GO" id="GO:0033650">
    <property type="term" value="C:host cell mitochondrion"/>
    <property type="evidence" value="ECO:0007669"/>
    <property type="project" value="UniProtKB-SubCell"/>
</dbReference>
<dbReference type="GO" id="GO:0042025">
    <property type="term" value="C:host cell nucleus"/>
    <property type="evidence" value="ECO:0007669"/>
    <property type="project" value="UniProtKB-SubCell"/>
</dbReference>
<dbReference type="GO" id="GO:0044423">
    <property type="term" value="C:virion component"/>
    <property type="evidence" value="ECO:0007669"/>
    <property type="project" value="UniProtKB-UniRule"/>
</dbReference>
<dbReference type="GO" id="GO:0003723">
    <property type="term" value="F:RNA binding"/>
    <property type="evidence" value="ECO:0007669"/>
    <property type="project" value="UniProtKB-UniRule"/>
</dbReference>
<dbReference type="GO" id="GO:0003968">
    <property type="term" value="F:RNA-directed RNA polymerase activity"/>
    <property type="evidence" value="ECO:0007669"/>
    <property type="project" value="UniProtKB-UniRule"/>
</dbReference>
<dbReference type="GO" id="GO:0006370">
    <property type="term" value="P:7-methylguanosine mRNA capping"/>
    <property type="evidence" value="ECO:0007669"/>
    <property type="project" value="UniProtKB-UniRule"/>
</dbReference>
<dbReference type="GO" id="GO:0075526">
    <property type="term" value="P:cap snatching"/>
    <property type="evidence" value="ECO:0007669"/>
    <property type="project" value="UniProtKB-UniRule"/>
</dbReference>
<dbReference type="GO" id="GO:0006351">
    <property type="term" value="P:DNA-templated transcription"/>
    <property type="evidence" value="ECO:0007669"/>
    <property type="project" value="UniProtKB-UniRule"/>
</dbReference>
<dbReference type="GO" id="GO:0039545">
    <property type="term" value="P:symbiont-mediated suppression of host cytoplasmic pattern recognition receptor signaling pathway via inhibition of MAVS activity"/>
    <property type="evidence" value="ECO:0007669"/>
    <property type="project" value="UniProtKB-UniRule"/>
</dbReference>
<dbReference type="GO" id="GO:0039657">
    <property type="term" value="P:symbiont-mediated suppression of host gene expression"/>
    <property type="evidence" value="ECO:0007669"/>
    <property type="project" value="UniProtKB-KW"/>
</dbReference>
<dbReference type="GO" id="GO:0039523">
    <property type="term" value="P:symbiont-mediated suppression of host mRNA transcription via inhibition of RNA polymerase II activity"/>
    <property type="evidence" value="ECO:0007669"/>
    <property type="project" value="UniProtKB-UniRule"/>
</dbReference>
<dbReference type="GO" id="GO:0039694">
    <property type="term" value="P:viral RNA genome replication"/>
    <property type="evidence" value="ECO:0007669"/>
    <property type="project" value="InterPro"/>
</dbReference>
<dbReference type="FunFam" id="3.30.30.90:FF:000001">
    <property type="entry name" value="Polymerase basic protein 2"/>
    <property type="match status" value="1"/>
</dbReference>
<dbReference type="Gene3D" id="3.30.30.90">
    <property type="entry name" value="Polymerase Basic Protein 2, C-terminal domain"/>
    <property type="match status" value="1"/>
</dbReference>
<dbReference type="HAMAP" id="MF_04062">
    <property type="entry name" value="INV_PB2"/>
    <property type="match status" value="1"/>
</dbReference>
<dbReference type="InterPro" id="IPR049110">
    <property type="entry name" value="Flu_PB2_2nd"/>
</dbReference>
<dbReference type="InterPro" id="IPR049114">
    <property type="entry name" value="Flu_PB2_6th"/>
</dbReference>
<dbReference type="InterPro" id="IPR049115">
    <property type="entry name" value="Flu_PB2_C"/>
</dbReference>
<dbReference type="InterPro" id="IPR048298">
    <property type="entry name" value="Flu_PB2_CAP-bd"/>
</dbReference>
<dbReference type="InterPro" id="IPR049111">
    <property type="entry name" value="Flu_PB2_middle"/>
</dbReference>
<dbReference type="InterPro" id="IPR049106">
    <property type="entry name" value="Flu_PB2_N"/>
</dbReference>
<dbReference type="InterPro" id="IPR001591">
    <property type="entry name" value="INV_PB2"/>
</dbReference>
<dbReference type="InterPro" id="IPR049113">
    <property type="entry name" value="PB2_helical"/>
</dbReference>
<dbReference type="InterPro" id="IPR037258">
    <property type="entry name" value="PDB2_C"/>
</dbReference>
<dbReference type="Pfam" id="PF20947">
    <property type="entry name" value="Flu_PB2_1st"/>
    <property type="match status" value="1"/>
</dbReference>
<dbReference type="Pfam" id="PF20948">
    <property type="entry name" value="Flu_PB2_2nd"/>
    <property type="match status" value="1"/>
</dbReference>
<dbReference type="Pfam" id="PF20949">
    <property type="entry name" value="Flu_PB2_3rd"/>
    <property type="match status" value="1"/>
</dbReference>
<dbReference type="Pfam" id="PF20950">
    <property type="entry name" value="Flu_PB2_4th"/>
    <property type="match status" value="1"/>
</dbReference>
<dbReference type="Pfam" id="PF00604">
    <property type="entry name" value="Flu_PB2_5th"/>
    <property type="match status" value="1"/>
</dbReference>
<dbReference type="Pfam" id="PF20951">
    <property type="entry name" value="Flu_PB2_6th"/>
    <property type="match status" value="1"/>
</dbReference>
<dbReference type="Pfam" id="PF20952">
    <property type="entry name" value="Flu_PB2_7th"/>
    <property type="match status" value="1"/>
</dbReference>
<dbReference type="SUPFAM" id="SSF160453">
    <property type="entry name" value="PB2 C-terminal domain-like"/>
    <property type="match status" value="1"/>
</dbReference>
<reference key="1">
    <citation type="submission" date="2005-12" db="EMBL/GenBank/DDBJ databases">
        <title>The NIAID influenza genome sequencing project.</title>
        <authorList>
            <person name="Ghedin E."/>
            <person name="Spiro D."/>
            <person name="Miller N."/>
            <person name="Zaborsky J."/>
            <person name="Feldblyum T."/>
            <person name="Subbu V."/>
            <person name="Shumway M."/>
            <person name="Sparenborg J."/>
            <person name="Groveman L."/>
            <person name="Halpin R."/>
            <person name="Sitz J."/>
            <person name="Koo H."/>
            <person name="Salzberg S.L."/>
            <person name="Webster R.G."/>
            <person name="Hoffmann E."/>
            <person name="Krauss S."/>
            <person name="Naeve C."/>
            <person name="Bao Y."/>
            <person name="Bolotov P."/>
            <person name="Dernovoy D."/>
            <person name="Kiryutin B."/>
            <person name="Lipman D.J."/>
            <person name="Tatusova T."/>
        </authorList>
    </citation>
    <scope>NUCLEOTIDE SEQUENCE [GENOMIC RNA]</scope>
</reference>